<comment type="subcellular location">
    <subcellularLocation>
        <location>Secreted</location>
    </subcellularLocation>
</comment>
<comment type="tissue specificity">
    <text>Expressed by the venom duct.</text>
</comment>
<comment type="domain">
    <text>The cysteine framework is XV (C-C-CC-C-C-C-C).</text>
</comment>
<comment type="PTM">
    <text evidence="1">Contains 4 disulfide bonds.</text>
</comment>
<accession>P0CI12</accession>
<reference key="1">
    <citation type="journal article" date="2007" name="J. Exp. Zool. B Mol. Dev. Evol.">
        <title>Venomous auger snail Hastula (Impages) hectica (Linnaeus, 1758): molecular phylogeny, foregut anatomy and comparative toxinology.</title>
        <authorList>
            <person name="Imperial J.S."/>
            <person name="Kantor Y."/>
            <person name="Watkins M."/>
            <person name="Heralde F.M. III"/>
            <person name="Stevenson B."/>
            <person name="Chen P."/>
            <person name="Hansson K."/>
            <person name="Stenflo J."/>
            <person name="Ownby J.P."/>
            <person name="Bouchet P."/>
            <person name="Olivera B.M."/>
        </authorList>
    </citation>
    <scope>PROTEIN SEQUENCE</scope>
    <source>
        <tissue>Venom</tissue>
    </source>
</reference>
<evidence type="ECO:0000250" key="1"/>
<keyword id="KW-0903">Direct protein sequencing</keyword>
<keyword id="KW-1015">Disulfide bond</keyword>
<keyword id="KW-0964">Secreted</keyword>
<keyword id="KW-0800">Toxin</keyword>
<name>TEF5_HASHE</name>
<dbReference type="GO" id="GO:0005576">
    <property type="term" value="C:extracellular region"/>
    <property type="evidence" value="ECO:0007669"/>
    <property type="project" value="UniProtKB-SubCell"/>
</dbReference>
<dbReference type="GO" id="GO:0090729">
    <property type="term" value="F:toxin activity"/>
    <property type="evidence" value="ECO:0007669"/>
    <property type="project" value="UniProtKB-KW"/>
</dbReference>
<proteinExistence type="evidence at protein level"/>
<sequence>NEVCPPGRCEPYCCDPRKCKCLSIDFYGLVCNCDS</sequence>
<organism>
    <name type="scientific">Hastula hectica</name>
    <name type="common">Sea snail</name>
    <name type="synonym">Impages hectica</name>
    <dbReference type="NCBI Taxonomy" id="745793"/>
    <lineage>
        <taxon>Eukaryota</taxon>
        <taxon>Metazoa</taxon>
        <taxon>Spiralia</taxon>
        <taxon>Lophotrochozoa</taxon>
        <taxon>Mollusca</taxon>
        <taxon>Gastropoda</taxon>
        <taxon>Caenogastropoda</taxon>
        <taxon>Neogastropoda</taxon>
        <taxon>Conoidea</taxon>
        <taxon>Terebridae</taxon>
        <taxon>Hastula</taxon>
    </lineage>
</organism>
<protein>
    <recommendedName>
        <fullName>Augerpeptide hheTx5</fullName>
    </recommendedName>
</protein>
<feature type="chain" id="PRO_0000402152" description="Augerpeptide hheTx5">
    <location>
        <begin position="1"/>
        <end position="35"/>
    </location>
</feature>